<name>IREA_DICDI</name>
<protein>
    <recommendedName>
        <fullName>Probable serine/threonine-protein kinase ireA</fullName>
        <ecNumber>2.7.11.1</ecNumber>
    </recommendedName>
    <alternativeName>
        <fullName>Inositol-requiring protein A</fullName>
    </alternativeName>
</protein>
<organism>
    <name type="scientific">Dictyostelium discoideum</name>
    <name type="common">Social amoeba</name>
    <dbReference type="NCBI Taxonomy" id="44689"/>
    <lineage>
        <taxon>Eukaryota</taxon>
        <taxon>Amoebozoa</taxon>
        <taxon>Evosea</taxon>
        <taxon>Eumycetozoa</taxon>
        <taxon>Dictyostelia</taxon>
        <taxon>Dictyosteliales</taxon>
        <taxon>Dictyosteliaceae</taxon>
        <taxon>Dictyostelium</taxon>
    </lineage>
</organism>
<sequence>MTFSKTRNKIIFLLFLIIINIFNINAYIKDENEDDLSLLISTLDGNIYSFNYESGELNWDLKPNGGDSLYSTSQFDRKQQQSTSTSTEITKSSPSILIPTLDGSGLLFQYSNDRLHQVPFSLQELVNTSPLFLKELEDKSSTSSTSTTSESSKDENKVTMFIGNKKTSITVVDSQTGEIIKSMSKDGLWLTDEDDCPVNIIPDEALMFTRSDYQIIALDPKSGVEKWNLSVGEYIPHSTKSFYNSEISLNFEGLIEVASLSQRMYKIYIKKPEKTVVGISHNYWEHILTSSPVSIYAYSSKKHILKKLDFHRKVSPYSNSLIPVASTDLMIPSNFDRTFMFDDYYGQLFIVSPPSNNNNNNNNNNNNNNNNNNNNNNNNNNNNNNNNNNKNNNNNNKNESDKSNLTPLTPYDPSKPNGANNNNNNNNDLLDSNKLKNYDIYLYSSIVILITSIIVFIRSKKNFNLINVNNNNNQNNNQNSNQNNNINNKKTPKKKKKKQKNKNNKNNNDEDDENEIENYNDNQNDLIDEFISTNSVIQQQQQQQQQLINSSNKINNGSGKIILDNGNVKIGKLEIITNKILGTGSCGTIVYEGKMEGRKVAVKRMLSQFVKFADREVSILIHSDEHTNVVRYYAKEEDDEFIYLAISFCQKSLDMYVQQTLSLQISPTDSPSIQSSNNNGNGNNGNNNNNNQIIIDNKTKQMILELFKGLEHLHSLNIVHRDIKPHNVLIDPNNRVKISDMGLGKLLDNDDQSLTFTSDSHGWQPAEYLNGTNRNTKKVDIFSLGCVVYYLLTGAHPFGHRYNREKNVLKGKFDIDQIKHLPDIHQLVHSMIQFEPEKRPDIGECINHPFFWEVHKKLSFLVAASDYLEFEKPTSPLNLEIDSHVDLVTDGSGDWWLKIDQVLIDNIGRYRKYNGKSIRDLLRVIRNKFNHYRDLSPEEQTCLGILPDGFFNYFDLKFPQLFIVTYLFILKNLKNDQYFVQYYY</sequence>
<dbReference type="EC" id="2.7.11.1"/>
<dbReference type="EMBL" id="AAFI02000003">
    <property type="protein sequence ID" value="EAL73278.1"/>
    <property type="molecule type" value="Genomic_DNA"/>
</dbReference>
<dbReference type="RefSeq" id="XP_647192.1">
    <property type="nucleotide sequence ID" value="XM_642100.1"/>
</dbReference>
<dbReference type="SMR" id="Q55GJ2"/>
<dbReference type="FunCoup" id="Q55GJ2">
    <property type="interactions" value="156"/>
</dbReference>
<dbReference type="STRING" id="44689.Q55GJ2"/>
<dbReference type="GlyCosmos" id="Q55GJ2">
    <property type="glycosylation" value="2 sites, No reported glycans"/>
</dbReference>
<dbReference type="GlyGen" id="Q55GJ2">
    <property type="glycosylation" value="3 sites"/>
</dbReference>
<dbReference type="PaxDb" id="44689-DDB0231217"/>
<dbReference type="EnsemblProtists" id="EAL73278">
    <property type="protein sequence ID" value="EAL73278"/>
    <property type="gene ID" value="DDB_G0267650"/>
</dbReference>
<dbReference type="GeneID" id="8615996"/>
<dbReference type="KEGG" id="ddi:DDB_G0267650"/>
<dbReference type="dictyBase" id="DDB_G0267650">
    <property type="gene designation" value="ireA"/>
</dbReference>
<dbReference type="VEuPathDB" id="AmoebaDB:DDB_G0267650"/>
<dbReference type="eggNOG" id="KOG1027">
    <property type="taxonomic scope" value="Eukaryota"/>
</dbReference>
<dbReference type="HOGENOM" id="CLU_004875_2_1_1"/>
<dbReference type="InParanoid" id="Q55GJ2"/>
<dbReference type="OMA" id="IDNIGRY"/>
<dbReference type="Reactome" id="R-DDI-381070">
    <property type="pathway name" value="IRE1alpha activates chaperones"/>
</dbReference>
<dbReference type="PRO" id="PR:Q55GJ2"/>
<dbReference type="Proteomes" id="UP000002195">
    <property type="component" value="Chromosome 1"/>
</dbReference>
<dbReference type="GO" id="GO:0005783">
    <property type="term" value="C:endoplasmic reticulum"/>
    <property type="evidence" value="ECO:0000314"/>
    <property type="project" value="dictyBase"/>
</dbReference>
<dbReference type="GO" id="GO:0005789">
    <property type="term" value="C:endoplasmic reticulum membrane"/>
    <property type="evidence" value="ECO:0000250"/>
    <property type="project" value="dictyBase"/>
</dbReference>
<dbReference type="GO" id="GO:1990604">
    <property type="term" value="C:IRE1-TRAF2-ASK1 complex"/>
    <property type="evidence" value="ECO:0000318"/>
    <property type="project" value="GO_Central"/>
</dbReference>
<dbReference type="GO" id="GO:0005524">
    <property type="term" value="F:ATP binding"/>
    <property type="evidence" value="ECO:0007669"/>
    <property type="project" value="UniProtKB-KW"/>
</dbReference>
<dbReference type="GO" id="GO:0106310">
    <property type="term" value="F:protein serine kinase activity"/>
    <property type="evidence" value="ECO:0007669"/>
    <property type="project" value="RHEA"/>
</dbReference>
<dbReference type="GO" id="GO:0004674">
    <property type="term" value="F:protein serine/threonine kinase activity"/>
    <property type="evidence" value="ECO:0000250"/>
    <property type="project" value="dictyBase"/>
</dbReference>
<dbReference type="GO" id="GO:0004521">
    <property type="term" value="F:RNA endonuclease activity"/>
    <property type="evidence" value="ECO:0000250"/>
    <property type="project" value="dictyBase"/>
</dbReference>
<dbReference type="GO" id="GO:0051082">
    <property type="term" value="F:unfolded protein binding"/>
    <property type="evidence" value="ECO:0000318"/>
    <property type="project" value="GO_Central"/>
</dbReference>
<dbReference type="GO" id="GO:0007029">
    <property type="term" value="P:endoplasmic reticulum organization"/>
    <property type="evidence" value="ECO:0000315"/>
    <property type="project" value="dictyBase"/>
</dbReference>
<dbReference type="GO" id="GO:0006020">
    <property type="term" value="P:inositol metabolic process"/>
    <property type="evidence" value="ECO:0000250"/>
    <property type="project" value="dictyBase"/>
</dbReference>
<dbReference type="GO" id="GO:0036498">
    <property type="term" value="P:IRE1-mediated unfolded protein response"/>
    <property type="evidence" value="ECO:0000318"/>
    <property type="project" value="GO_Central"/>
</dbReference>
<dbReference type="GO" id="GO:0006397">
    <property type="term" value="P:mRNA processing"/>
    <property type="evidence" value="ECO:0007669"/>
    <property type="project" value="InterPro"/>
</dbReference>
<dbReference type="GO" id="GO:0006468">
    <property type="term" value="P:protein phosphorylation"/>
    <property type="evidence" value="ECO:0000250"/>
    <property type="project" value="dictyBase"/>
</dbReference>
<dbReference type="GO" id="GO:1903894">
    <property type="term" value="P:regulation of IRE1-mediated unfolded protein response"/>
    <property type="evidence" value="ECO:0000315"/>
    <property type="project" value="dictyBase"/>
</dbReference>
<dbReference type="CDD" id="cd09213">
    <property type="entry name" value="Luminal_IRE1_like"/>
    <property type="match status" value="1"/>
</dbReference>
<dbReference type="CDD" id="cd10422">
    <property type="entry name" value="RNase_Ire1"/>
    <property type="match status" value="1"/>
</dbReference>
<dbReference type="FunFam" id="3.30.200.20:FF:000077">
    <property type="entry name" value="Putative Serine/threonine-protein kinase/endoribonuclease IRE1"/>
    <property type="match status" value="1"/>
</dbReference>
<dbReference type="FunFam" id="1.10.510.10:FF:001420">
    <property type="entry name" value="Serine/threonine-protein kinase ppk4"/>
    <property type="match status" value="1"/>
</dbReference>
<dbReference type="Gene3D" id="1.20.1440.180">
    <property type="entry name" value="KEN domain"/>
    <property type="match status" value="1"/>
</dbReference>
<dbReference type="Gene3D" id="3.30.200.20">
    <property type="entry name" value="Phosphorylase Kinase, domain 1"/>
    <property type="match status" value="1"/>
</dbReference>
<dbReference type="Gene3D" id="1.10.510.10">
    <property type="entry name" value="Transferase(Phosphotransferase) domain 1"/>
    <property type="match status" value="1"/>
</dbReference>
<dbReference type="Gene3D" id="2.130.10.10">
    <property type="entry name" value="YVTN repeat-like/Quinoprotein amine dehydrogenase"/>
    <property type="match status" value="1"/>
</dbReference>
<dbReference type="InterPro" id="IPR045133">
    <property type="entry name" value="IRE1/2-like"/>
</dbReference>
<dbReference type="InterPro" id="IPR010513">
    <property type="entry name" value="KEN_dom"/>
</dbReference>
<dbReference type="InterPro" id="IPR038357">
    <property type="entry name" value="KEN_sf"/>
</dbReference>
<dbReference type="InterPro" id="IPR011009">
    <property type="entry name" value="Kinase-like_dom_sf"/>
</dbReference>
<dbReference type="InterPro" id="IPR018391">
    <property type="entry name" value="PQQ_b-propeller_rpt"/>
</dbReference>
<dbReference type="InterPro" id="IPR000719">
    <property type="entry name" value="Prot_kinase_dom"/>
</dbReference>
<dbReference type="InterPro" id="IPR011047">
    <property type="entry name" value="Quinoprotein_ADH-like_sf"/>
</dbReference>
<dbReference type="InterPro" id="IPR008271">
    <property type="entry name" value="Ser/Thr_kinase_AS"/>
</dbReference>
<dbReference type="InterPro" id="IPR015943">
    <property type="entry name" value="WD40/YVTN_repeat-like_dom_sf"/>
</dbReference>
<dbReference type="PANTHER" id="PTHR13954">
    <property type="entry name" value="IRE1-RELATED"/>
    <property type="match status" value="1"/>
</dbReference>
<dbReference type="PANTHER" id="PTHR13954:SF6">
    <property type="entry name" value="NON-SPECIFIC SERINE_THREONINE PROTEIN KINASE"/>
    <property type="match status" value="1"/>
</dbReference>
<dbReference type="Pfam" id="PF00069">
    <property type="entry name" value="Pkinase"/>
    <property type="match status" value="1"/>
</dbReference>
<dbReference type="Pfam" id="PF06479">
    <property type="entry name" value="Ribonuc_2-5A"/>
    <property type="match status" value="1"/>
</dbReference>
<dbReference type="SMART" id="SM00564">
    <property type="entry name" value="PQQ"/>
    <property type="match status" value="3"/>
</dbReference>
<dbReference type="SMART" id="SM00580">
    <property type="entry name" value="PUG"/>
    <property type="match status" value="1"/>
</dbReference>
<dbReference type="SMART" id="SM00220">
    <property type="entry name" value="S_TKc"/>
    <property type="match status" value="1"/>
</dbReference>
<dbReference type="SUPFAM" id="SSF56112">
    <property type="entry name" value="Protein kinase-like (PK-like)"/>
    <property type="match status" value="1"/>
</dbReference>
<dbReference type="SUPFAM" id="SSF50998">
    <property type="entry name" value="Quinoprotein alcohol dehydrogenase-like"/>
    <property type="match status" value="1"/>
</dbReference>
<dbReference type="PROSITE" id="PS51392">
    <property type="entry name" value="KEN"/>
    <property type="match status" value="1"/>
</dbReference>
<dbReference type="PROSITE" id="PS50011">
    <property type="entry name" value="PROTEIN_KINASE_DOM"/>
    <property type="match status" value="1"/>
</dbReference>
<dbReference type="PROSITE" id="PS00108">
    <property type="entry name" value="PROTEIN_KINASE_ST"/>
    <property type="match status" value="1"/>
</dbReference>
<feature type="signal peptide" evidence="1">
    <location>
        <begin position="1"/>
        <end position="26"/>
    </location>
</feature>
<feature type="chain" id="PRO_0000362015" description="Probable serine/threonine-protein kinase ireA">
    <location>
        <begin position="27"/>
        <end position="984"/>
    </location>
</feature>
<feature type="topological domain" description="Extracellular" evidence="1">
    <location>
        <begin position="27"/>
        <end position="436"/>
    </location>
</feature>
<feature type="transmembrane region" description="Helical" evidence="1">
    <location>
        <begin position="437"/>
        <end position="457"/>
    </location>
</feature>
<feature type="topological domain" description="Cytoplasmic" evidence="1">
    <location>
        <begin position="458"/>
        <end position="984"/>
    </location>
</feature>
<feature type="domain" description="Protein kinase" evidence="2">
    <location>
        <begin position="575"/>
        <end position="851"/>
    </location>
</feature>
<feature type="domain" description="KEN" evidence="3">
    <location>
        <begin position="854"/>
        <end position="984"/>
    </location>
</feature>
<feature type="region of interest" description="Disordered" evidence="5">
    <location>
        <begin position="70"/>
        <end position="91"/>
    </location>
</feature>
<feature type="region of interest" description="Disordered" evidence="5">
    <location>
        <begin position="137"/>
        <end position="157"/>
    </location>
</feature>
<feature type="region of interest" description="Disordered" evidence="5">
    <location>
        <begin position="352"/>
        <end position="427"/>
    </location>
</feature>
<feature type="region of interest" description="Disordered" evidence="5">
    <location>
        <begin position="472"/>
        <end position="518"/>
    </location>
</feature>
<feature type="region of interest" description="Disordered" evidence="5">
    <location>
        <begin position="667"/>
        <end position="692"/>
    </location>
</feature>
<feature type="coiled-coil region" evidence="1">
    <location>
        <begin position="467"/>
        <end position="533"/>
    </location>
</feature>
<feature type="compositionally biased region" description="Low complexity" evidence="5">
    <location>
        <begin position="82"/>
        <end position="91"/>
    </location>
</feature>
<feature type="compositionally biased region" description="Low complexity" evidence="5">
    <location>
        <begin position="141"/>
        <end position="150"/>
    </location>
</feature>
<feature type="compositionally biased region" description="Low complexity" evidence="5">
    <location>
        <begin position="356"/>
        <end position="397"/>
    </location>
</feature>
<feature type="compositionally biased region" description="Low complexity" evidence="5">
    <location>
        <begin position="472"/>
        <end position="489"/>
    </location>
</feature>
<feature type="compositionally biased region" description="Basic residues" evidence="5">
    <location>
        <begin position="490"/>
        <end position="503"/>
    </location>
</feature>
<feature type="compositionally biased region" description="Acidic residues" evidence="5">
    <location>
        <begin position="509"/>
        <end position="518"/>
    </location>
</feature>
<feature type="compositionally biased region" description="Polar residues" evidence="5">
    <location>
        <begin position="667"/>
        <end position="676"/>
    </location>
</feature>
<feature type="compositionally biased region" description="Low complexity" evidence="5">
    <location>
        <begin position="677"/>
        <end position="691"/>
    </location>
</feature>
<feature type="active site" description="Proton acceptor" evidence="2 4">
    <location>
        <position position="722"/>
    </location>
</feature>
<feature type="binding site" evidence="2">
    <location>
        <begin position="581"/>
        <end position="589"/>
    </location>
    <ligand>
        <name>ATP</name>
        <dbReference type="ChEBI" id="CHEBI:30616"/>
    </ligand>
</feature>
<feature type="binding site" evidence="2">
    <location>
        <position position="603"/>
    </location>
    <ligand>
        <name>ATP</name>
        <dbReference type="ChEBI" id="CHEBI:30616"/>
    </ligand>
</feature>
<feature type="glycosylation site" description="N-linked (GlcNAc...) asparagine" evidence="1">
    <location>
        <position position="228"/>
    </location>
</feature>
<feature type="glycosylation site" description="N-linked (GlcNAc...) asparagine" evidence="1">
    <location>
        <position position="398"/>
    </location>
</feature>
<reference key="1">
    <citation type="journal article" date="2005" name="Nature">
        <title>The genome of the social amoeba Dictyostelium discoideum.</title>
        <authorList>
            <person name="Eichinger L."/>
            <person name="Pachebat J.A."/>
            <person name="Gloeckner G."/>
            <person name="Rajandream M.A."/>
            <person name="Sucgang R."/>
            <person name="Berriman M."/>
            <person name="Song J."/>
            <person name="Olsen R."/>
            <person name="Szafranski K."/>
            <person name="Xu Q."/>
            <person name="Tunggal B."/>
            <person name="Kummerfeld S."/>
            <person name="Madera M."/>
            <person name="Konfortov B.A."/>
            <person name="Rivero F."/>
            <person name="Bankier A.T."/>
            <person name="Lehmann R."/>
            <person name="Hamlin N."/>
            <person name="Davies R."/>
            <person name="Gaudet P."/>
            <person name="Fey P."/>
            <person name="Pilcher K."/>
            <person name="Chen G."/>
            <person name="Saunders D."/>
            <person name="Sodergren E.J."/>
            <person name="Davis P."/>
            <person name="Kerhornou A."/>
            <person name="Nie X."/>
            <person name="Hall N."/>
            <person name="Anjard C."/>
            <person name="Hemphill L."/>
            <person name="Bason N."/>
            <person name="Farbrother P."/>
            <person name="Desany B."/>
            <person name="Just E."/>
            <person name="Morio T."/>
            <person name="Rost R."/>
            <person name="Churcher C.M."/>
            <person name="Cooper J."/>
            <person name="Haydock S."/>
            <person name="van Driessche N."/>
            <person name="Cronin A."/>
            <person name="Goodhead I."/>
            <person name="Muzny D.M."/>
            <person name="Mourier T."/>
            <person name="Pain A."/>
            <person name="Lu M."/>
            <person name="Harper D."/>
            <person name="Lindsay R."/>
            <person name="Hauser H."/>
            <person name="James K.D."/>
            <person name="Quiles M."/>
            <person name="Madan Babu M."/>
            <person name="Saito T."/>
            <person name="Buchrieser C."/>
            <person name="Wardroper A."/>
            <person name="Felder M."/>
            <person name="Thangavelu M."/>
            <person name="Johnson D."/>
            <person name="Knights A."/>
            <person name="Loulseged H."/>
            <person name="Mungall K.L."/>
            <person name="Oliver K."/>
            <person name="Price C."/>
            <person name="Quail M.A."/>
            <person name="Urushihara H."/>
            <person name="Hernandez J."/>
            <person name="Rabbinowitsch E."/>
            <person name="Steffen D."/>
            <person name="Sanders M."/>
            <person name="Ma J."/>
            <person name="Kohara Y."/>
            <person name="Sharp S."/>
            <person name="Simmonds M.N."/>
            <person name="Spiegler S."/>
            <person name="Tivey A."/>
            <person name="Sugano S."/>
            <person name="White B."/>
            <person name="Walker D."/>
            <person name="Woodward J.R."/>
            <person name="Winckler T."/>
            <person name="Tanaka Y."/>
            <person name="Shaulsky G."/>
            <person name="Schleicher M."/>
            <person name="Weinstock G.M."/>
            <person name="Rosenthal A."/>
            <person name="Cox E.C."/>
            <person name="Chisholm R.L."/>
            <person name="Gibbs R.A."/>
            <person name="Loomis W.F."/>
            <person name="Platzer M."/>
            <person name="Kay R.R."/>
            <person name="Williams J.G."/>
            <person name="Dear P.H."/>
            <person name="Noegel A.A."/>
            <person name="Barrell B.G."/>
            <person name="Kuspa A."/>
        </authorList>
    </citation>
    <scope>NUCLEOTIDE SEQUENCE [LARGE SCALE GENOMIC DNA]</scope>
    <source>
        <strain>AX4</strain>
    </source>
</reference>
<evidence type="ECO:0000255" key="1"/>
<evidence type="ECO:0000255" key="2">
    <source>
        <dbReference type="PROSITE-ProRule" id="PRU00159"/>
    </source>
</evidence>
<evidence type="ECO:0000255" key="3">
    <source>
        <dbReference type="PROSITE-ProRule" id="PRU00725"/>
    </source>
</evidence>
<evidence type="ECO:0000255" key="4">
    <source>
        <dbReference type="PROSITE-ProRule" id="PRU10027"/>
    </source>
</evidence>
<evidence type="ECO:0000256" key="5">
    <source>
        <dbReference type="SAM" id="MobiDB-lite"/>
    </source>
</evidence>
<evidence type="ECO:0000305" key="6"/>
<proteinExistence type="inferred from homology"/>
<accession>Q55GJ2</accession>
<comment type="catalytic activity">
    <reaction>
        <text>L-seryl-[protein] + ATP = O-phospho-L-seryl-[protein] + ADP + H(+)</text>
        <dbReference type="Rhea" id="RHEA:17989"/>
        <dbReference type="Rhea" id="RHEA-COMP:9863"/>
        <dbReference type="Rhea" id="RHEA-COMP:11604"/>
        <dbReference type="ChEBI" id="CHEBI:15378"/>
        <dbReference type="ChEBI" id="CHEBI:29999"/>
        <dbReference type="ChEBI" id="CHEBI:30616"/>
        <dbReference type="ChEBI" id="CHEBI:83421"/>
        <dbReference type="ChEBI" id="CHEBI:456216"/>
        <dbReference type="EC" id="2.7.11.1"/>
    </reaction>
</comment>
<comment type="catalytic activity">
    <reaction>
        <text>L-threonyl-[protein] + ATP = O-phospho-L-threonyl-[protein] + ADP + H(+)</text>
        <dbReference type="Rhea" id="RHEA:46608"/>
        <dbReference type="Rhea" id="RHEA-COMP:11060"/>
        <dbReference type="Rhea" id="RHEA-COMP:11605"/>
        <dbReference type="ChEBI" id="CHEBI:15378"/>
        <dbReference type="ChEBI" id="CHEBI:30013"/>
        <dbReference type="ChEBI" id="CHEBI:30616"/>
        <dbReference type="ChEBI" id="CHEBI:61977"/>
        <dbReference type="ChEBI" id="CHEBI:456216"/>
        <dbReference type="EC" id="2.7.11.1"/>
    </reaction>
</comment>
<comment type="subcellular location">
    <subcellularLocation>
        <location evidence="6">Membrane</location>
        <topology evidence="6">Single-pass type I membrane protein</topology>
    </subcellularLocation>
</comment>
<comment type="similarity">
    <text evidence="2">Belongs to the protein kinase superfamily. Ser/Thr protein kinase family.</text>
</comment>
<gene>
    <name type="primary">ireA</name>
    <name type="ORF">DDB_G0267650</name>
</gene>
<keyword id="KW-0067">ATP-binding</keyword>
<keyword id="KW-0175">Coiled coil</keyword>
<keyword id="KW-0325">Glycoprotein</keyword>
<keyword id="KW-0418">Kinase</keyword>
<keyword id="KW-0472">Membrane</keyword>
<keyword id="KW-0547">Nucleotide-binding</keyword>
<keyword id="KW-1185">Reference proteome</keyword>
<keyword id="KW-0723">Serine/threonine-protein kinase</keyword>
<keyword id="KW-0732">Signal</keyword>
<keyword id="KW-0808">Transferase</keyword>
<keyword id="KW-0812">Transmembrane</keyword>
<keyword id="KW-1133">Transmembrane helix</keyword>